<sequence>MTFRLIAENRKARFNYEIIEKIEAGIVLQGTEVKSIRAGKMTLADSYAVVNREELYWLNGQIAHYEHGNIHNHEPFRSRKLLLRHKEISRLIGLVKEKGLSIIPLRAYWKGSKVKLELGIAKGKKLYDKRATTKERDWQREKQRILKTNH</sequence>
<protein>
    <recommendedName>
        <fullName evidence="1">SsrA-binding protein</fullName>
    </recommendedName>
    <alternativeName>
        <fullName evidence="1">Small protein B</fullName>
    </alternativeName>
</protein>
<organism>
    <name type="scientific">Magnetococcus marinus (strain ATCC BAA-1437 / JCM 17883 / MC-1)</name>
    <dbReference type="NCBI Taxonomy" id="156889"/>
    <lineage>
        <taxon>Bacteria</taxon>
        <taxon>Pseudomonadati</taxon>
        <taxon>Pseudomonadota</taxon>
        <taxon>Alphaproteobacteria</taxon>
        <taxon>Magnetococcales</taxon>
        <taxon>Magnetococcaceae</taxon>
        <taxon>Magnetococcus</taxon>
    </lineage>
</organism>
<dbReference type="EMBL" id="CP000471">
    <property type="protein sequence ID" value="ABK45961.1"/>
    <property type="molecule type" value="Genomic_DNA"/>
</dbReference>
<dbReference type="RefSeq" id="WP_011715017.1">
    <property type="nucleotide sequence ID" value="NC_008576.1"/>
</dbReference>
<dbReference type="SMR" id="A0LDB8"/>
<dbReference type="STRING" id="156889.Mmc1_3476"/>
<dbReference type="KEGG" id="mgm:Mmc1_3476"/>
<dbReference type="eggNOG" id="COG0691">
    <property type="taxonomic scope" value="Bacteria"/>
</dbReference>
<dbReference type="HOGENOM" id="CLU_108953_0_0_5"/>
<dbReference type="OrthoDB" id="9805462at2"/>
<dbReference type="Proteomes" id="UP000002586">
    <property type="component" value="Chromosome"/>
</dbReference>
<dbReference type="GO" id="GO:0005829">
    <property type="term" value="C:cytosol"/>
    <property type="evidence" value="ECO:0007669"/>
    <property type="project" value="TreeGrafter"/>
</dbReference>
<dbReference type="GO" id="GO:0003723">
    <property type="term" value="F:RNA binding"/>
    <property type="evidence" value="ECO:0007669"/>
    <property type="project" value="UniProtKB-UniRule"/>
</dbReference>
<dbReference type="GO" id="GO:0070929">
    <property type="term" value="P:trans-translation"/>
    <property type="evidence" value="ECO:0007669"/>
    <property type="project" value="UniProtKB-UniRule"/>
</dbReference>
<dbReference type="CDD" id="cd09294">
    <property type="entry name" value="SmpB"/>
    <property type="match status" value="1"/>
</dbReference>
<dbReference type="Gene3D" id="2.40.280.10">
    <property type="match status" value="1"/>
</dbReference>
<dbReference type="HAMAP" id="MF_00023">
    <property type="entry name" value="SmpB"/>
    <property type="match status" value="1"/>
</dbReference>
<dbReference type="InterPro" id="IPR023620">
    <property type="entry name" value="SmpB"/>
</dbReference>
<dbReference type="InterPro" id="IPR000037">
    <property type="entry name" value="SsrA-bd_prot"/>
</dbReference>
<dbReference type="InterPro" id="IPR020081">
    <property type="entry name" value="SsrA-bd_prot_CS"/>
</dbReference>
<dbReference type="NCBIfam" id="NF003843">
    <property type="entry name" value="PRK05422.1"/>
    <property type="match status" value="1"/>
</dbReference>
<dbReference type="NCBIfam" id="TIGR00086">
    <property type="entry name" value="smpB"/>
    <property type="match status" value="1"/>
</dbReference>
<dbReference type="PANTHER" id="PTHR30308:SF2">
    <property type="entry name" value="SSRA-BINDING PROTEIN"/>
    <property type="match status" value="1"/>
</dbReference>
<dbReference type="PANTHER" id="PTHR30308">
    <property type="entry name" value="TMRNA-BINDING COMPONENT OF TRANS-TRANSLATION TAGGING COMPLEX"/>
    <property type="match status" value="1"/>
</dbReference>
<dbReference type="Pfam" id="PF01668">
    <property type="entry name" value="SmpB"/>
    <property type="match status" value="1"/>
</dbReference>
<dbReference type="SUPFAM" id="SSF74982">
    <property type="entry name" value="Small protein B (SmpB)"/>
    <property type="match status" value="1"/>
</dbReference>
<dbReference type="PROSITE" id="PS01317">
    <property type="entry name" value="SSRP"/>
    <property type="match status" value="1"/>
</dbReference>
<accession>A0LDB8</accession>
<name>SSRP_MAGMM</name>
<evidence type="ECO:0000255" key="1">
    <source>
        <dbReference type="HAMAP-Rule" id="MF_00023"/>
    </source>
</evidence>
<reference key="1">
    <citation type="journal article" date="2009" name="Appl. Environ. Microbiol.">
        <title>Complete genome sequence of the chemolithoautotrophic marine magnetotactic coccus strain MC-1.</title>
        <authorList>
            <person name="Schubbe S."/>
            <person name="Williams T.J."/>
            <person name="Xie G."/>
            <person name="Kiss H.E."/>
            <person name="Brettin T.S."/>
            <person name="Martinez D."/>
            <person name="Ross C.A."/>
            <person name="Schuler D."/>
            <person name="Cox B.L."/>
            <person name="Nealson K.H."/>
            <person name="Bazylinski D.A."/>
        </authorList>
    </citation>
    <scope>NUCLEOTIDE SEQUENCE [LARGE SCALE GENOMIC DNA]</scope>
    <source>
        <strain>ATCC BAA-1437 / JCM 17883 / MC-1</strain>
    </source>
</reference>
<comment type="function">
    <text evidence="1">Required for rescue of stalled ribosomes mediated by trans-translation. Binds to transfer-messenger RNA (tmRNA), required for stable association of tmRNA with ribosomes. tmRNA and SmpB together mimic tRNA shape, replacing the anticodon stem-loop with SmpB. tmRNA is encoded by the ssrA gene; the 2 termini fold to resemble tRNA(Ala) and it encodes a 'tag peptide', a short internal open reading frame. During trans-translation Ala-aminoacylated tmRNA acts like a tRNA, entering the A-site of stalled ribosomes, displacing the stalled mRNA. The ribosome then switches to translate the ORF on the tmRNA; the nascent peptide is terminated with the 'tag peptide' encoded by the tmRNA and targeted for degradation. The ribosome is freed to recommence translation, which seems to be the essential function of trans-translation.</text>
</comment>
<comment type="subcellular location">
    <subcellularLocation>
        <location evidence="1">Cytoplasm</location>
    </subcellularLocation>
    <text evidence="1">The tmRNA-SmpB complex associates with stalled 70S ribosomes.</text>
</comment>
<comment type="similarity">
    <text evidence="1">Belongs to the SmpB family.</text>
</comment>
<proteinExistence type="inferred from homology"/>
<keyword id="KW-0963">Cytoplasm</keyword>
<keyword id="KW-1185">Reference proteome</keyword>
<keyword id="KW-0694">RNA-binding</keyword>
<gene>
    <name evidence="1" type="primary">smpB</name>
    <name type="ordered locus">Mmc1_3476</name>
</gene>
<feature type="chain" id="PRO_1000116870" description="SsrA-binding protein">
    <location>
        <begin position="1"/>
        <end position="150"/>
    </location>
</feature>